<reference key="1">
    <citation type="journal article" date="2008" name="Genome Biol.">
        <title>Encapsulated in silica: genome, proteome and physiology of the thermophilic bacterium Anoxybacillus flavithermus WK1.</title>
        <authorList>
            <person name="Saw J.H."/>
            <person name="Mountain B.W."/>
            <person name="Feng L."/>
            <person name="Omelchenko M.V."/>
            <person name="Hou S."/>
            <person name="Saito J.A."/>
            <person name="Stott M.B."/>
            <person name="Li D."/>
            <person name="Zhao G."/>
            <person name="Wu J."/>
            <person name="Galperin M.Y."/>
            <person name="Koonin E.V."/>
            <person name="Makarova K.S."/>
            <person name="Wolf Y.I."/>
            <person name="Rigden D.J."/>
            <person name="Dunfield P.F."/>
            <person name="Wang L."/>
            <person name="Alam M."/>
        </authorList>
    </citation>
    <scope>NUCLEOTIDE SEQUENCE [LARGE SCALE GENOMIC DNA]</scope>
    <source>
        <strain>DSM 21510 / WK1</strain>
    </source>
</reference>
<proteinExistence type="inferred from homology"/>
<evidence type="ECO:0000250" key="1"/>
<evidence type="ECO:0000305" key="2"/>
<accession>B7GFA1</accession>
<protein>
    <recommendedName>
        <fullName>Dihydroorotate dehydrogenase B (NAD(+)), catalytic subunit</fullName>
        <shortName>DHOD B</shortName>
        <shortName>DHODase B</shortName>
        <shortName>DHOdehase B</shortName>
        <ecNumber>1.3.1.14</ecNumber>
    </recommendedName>
    <alternativeName>
        <fullName>Dihydroorotate oxidase B</fullName>
    </alternativeName>
    <alternativeName>
        <fullName>Orotate reductase (NADH)</fullName>
    </alternativeName>
</protein>
<sequence length="312" mass="32899">MNRLAVELPGLSLKNPIMPASGCFGFGREYAKFYDLSVLGAMMIKATTLEARFGNPTPRVAETPSGMLNAIGLQNPGVDYVLAEELPWLAQYDVPIIANVAGSTVEEYVEVAKRISKAPNVHALELNISCPNVKKGGIAFGTVPEVAAELTRAVKEVSDVPVYVKLSPNVTNIVAMAKAIEQAGADGLTMINTLVGMRIDVKTGKPILANGTGGLSGPAIKPIAIRMIYEVSQAVSLPIIGMGGIQSAEDVIEFFYAGASAVAIGTANFIDPYVCPNIIAELPALLDELGFDHISECTGRSWNNGQTVYCGA</sequence>
<name>PYRDB_ANOFW</name>
<organism>
    <name type="scientific">Anoxybacillus flavithermus (strain DSM 21510 / WK1)</name>
    <dbReference type="NCBI Taxonomy" id="491915"/>
    <lineage>
        <taxon>Bacteria</taxon>
        <taxon>Bacillati</taxon>
        <taxon>Bacillota</taxon>
        <taxon>Bacilli</taxon>
        <taxon>Bacillales</taxon>
        <taxon>Anoxybacillaceae</taxon>
        <taxon>Anoxybacillus</taxon>
    </lineage>
</organism>
<feature type="chain" id="PRO_1000195038" description="Dihydroorotate dehydrogenase B (NAD(+)), catalytic subunit">
    <location>
        <begin position="1"/>
        <end position="312"/>
    </location>
</feature>
<feature type="active site" description="Nucleophile">
    <location>
        <position position="130"/>
    </location>
</feature>
<feature type="binding site" evidence="1">
    <location>
        <position position="21"/>
    </location>
    <ligand>
        <name>FMN</name>
        <dbReference type="ChEBI" id="CHEBI:58210"/>
    </ligand>
</feature>
<feature type="binding site" evidence="1">
    <location>
        <begin position="45"/>
        <end position="46"/>
    </location>
    <ligand>
        <name>FMN</name>
        <dbReference type="ChEBI" id="CHEBI:58210"/>
    </ligand>
</feature>
<feature type="binding site" evidence="1">
    <location>
        <position position="45"/>
    </location>
    <ligand>
        <name>substrate</name>
    </ligand>
</feature>
<feature type="binding site" evidence="1">
    <location>
        <begin position="69"/>
        <end position="73"/>
    </location>
    <ligand>
        <name>substrate</name>
    </ligand>
</feature>
<feature type="binding site" evidence="1">
    <location>
        <position position="99"/>
    </location>
    <ligand>
        <name>FMN</name>
        <dbReference type="ChEBI" id="CHEBI:58210"/>
    </ligand>
</feature>
<feature type="binding site" evidence="1">
    <location>
        <position position="127"/>
    </location>
    <ligand>
        <name>FMN</name>
        <dbReference type="ChEBI" id="CHEBI:58210"/>
    </ligand>
</feature>
<feature type="binding site" evidence="1">
    <location>
        <position position="127"/>
    </location>
    <ligand>
        <name>substrate</name>
    </ligand>
</feature>
<feature type="binding site" evidence="1">
    <location>
        <position position="165"/>
    </location>
    <ligand>
        <name>FMN</name>
        <dbReference type="ChEBI" id="CHEBI:58210"/>
    </ligand>
</feature>
<feature type="binding site" evidence="1">
    <location>
        <position position="191"/>
    </location>
    <ligand>
        <name>FMN</name>
        <dbReference type="ChEBI" id="CHEBI:58210"/>
    </ligand>
</feature>
<feature type="binding site" evidence="1">
    <location>
        <begin position="192"/>
        <end position="193"/>
    </location>
    <ligand>
        <name>substrate</name>
    </ligand>
</feature>
<feature type="binding site" evidence="1">
    <location>
        <position position="217"/>
    </location>
    <ligand>
        <name>FMN</name>
        <dbReference type="ChEBI" id="CHEBI:58210"/>
    </ligand>
</feature>
<feature type="binding site" evidence="1">
    <location>
        <begin position="243"/>
        <end position="244"/>
    </location>
    <ligand>
        <name>FMN</name>
        <dbReference type="ChEBI" id="CHEBI:58210"/>
    </ligand>
</feature>
<feature type="binding site" evidence="1">
    <location>
        <begin position="265"/>
        <end position="266"/>
    </location>
    <ligand>
        <name>FMN</name>
        <dbReference type="ChEBI" id="CHEBI:58210"/>
    </ligand>
</feature>
<keyword id="KW-0963">Cytoplasm</keyword>
<keyword id="KW-0285">Flavoprotein</keyword>
<keyword id="KW-0288">FMN</keyword>
<keyword id="KW-0520">NAD</keyword>
<keyword id="KW-0560">Oxidoreductase</keyword>
<keyword id="KW-0665">Pyrimidine biosynthesis</keyword>
<gene>
    <name type="primary">pyrD</name>
    <name type="ordered locus">Aflv_1801</name>
</gene>
<dbReference type="EC" id="1.3.1.14"/>
<dbReference type="EMBL" id="CP000922">
    <property type="protein sequence ID" value="ACJ34162.1"/>
    <property type="molecule type" value="Genomic_DNA"/>
</dbReference>
<dbReference type="RefSeq" id="WP_012575361.1">
    <property type="nucleotide sequence ID" value="NC_011567.1"/>
</dbReference>
<dbReference type="SMR" id="B7GFA1"/>
<dbReference type="STRING" id="491915.Aflv_1801"/>
<dbReference type="GeneID" id="7038054"/>
<dbReference type="KEGG" id="afl:Aflv_1801"/>
<dbReference type="PATRIC" id="fig|491915.6.peg.1852"/>
<dbReference type="eggNOG" id="COG0167">
    <property type="taxonomic scope" value="Bacteria"/>
</dbReference>
<dbReference type="HOGENOM" id="CLU_042042_0_0_9"/>
<dbReference type="UniPathway" id="UPA00070">
    <property type="reaction ID" value="UER00945"/>
</dbReference>
<dbReference type="Proteomes" id="UP000000742">
    <property type="component" value="Chromosome"/>
</dbReference>
<dbReference type="GO" id="GO:0005737">
    <property type="term" value="C:cytoplasm"/>
    <property type="evidence" value="ECO:0007669"/>
    <property type="project" value="UniProtKB-SubCell"/>
</dbReference>
<dbReference type="GO" id="GO:0004589">
    <property type="term" value="F:dihydroorotate dehydrogenase (NAD+) activity"/>
    <property type="evidence" value="ECO:0007669"/>
    <property type="project" value="UniProtKB-EC"/>
</dbReference>
<dbReference type="GO" id="GO:0006207">
    <property type="term" value="P:'de novo' pyrimidine nucleobase biosynthetic process"/>
    <property type="evidence" value="ECO:0007669"/>
    <property type="project" value="InterPro"/>
</dbReference>
<dbReference type="GO" id="GO:0044205">
    <property type="term" value="P:'de novo' UMP biosynthetic process"/>
    <property type="evidence" value="ECO:0007669"/>
    <property type="project" value="UniProtKB-UniRule"/>
</dbReference>
<dbReference type="CDD" id="cd04740">
    <property type="entry name" value="DHOD_1B_like"/>
    <property type="match status" value="1"/>
</dbReference>
<dbReference type="FunFam" id="3.20.20.70:FF:000069">
    <property type="entry name" value="Dihydroorotate dehydrogenase"/>
    <property type="match status" value="1"/>
</dbReference>
<dbReference type="Gene3D" id="3.20.20.70">
    <property type="entry name" value="Aldolase class I"/>
    <property type="match status" value="1"/>
</dbReference>
<dbReference type="HAMAP" id="MF_00224">
    <property type="entry name" value="DHO_dh_type1"/>
    <property type="match status" value="1"/>
</dbReference>
<dbReference type="InterPro" id="IPR013785">
    <property type="entry name" value="Aldolase_TIM"/>
</dbReference>
<dbReference type="InterPro" id="IPR050074">
    <property type="entry name" value="DHO_dehydrogenase"/>
</dbReference>
<dbReference type="InterPro" id="IPR033888">
    <property type="entry name" value="DHOD_1B"/>
</dbReference>
<dbReference type="InterPro" id="IPR024920">
    <property type="entry name" value="Dihydroorotate_DH_1"/>
</dbReference>
<dbReference type="InterPro" id="IPR012135">
    <property type="entry name" value="Dihydroorotate_DH_1_2"/>
</dbReference>
<dbReference type="InterPro" id="IPR005720">
    <property type="entry name" value="Dihydroorotate_DH_cat"/>
</dbReference>
<dbReference type="InterPro" id="IPR001295">
    <property type="entry name" value="Dihydroorotate_DH_CS"/>
</dbReference>
<dbReference type="InterPro" id="IPR049622">
    <property type="entry name" value="Dihydroorotate_DH_I"/>
</dbReference>
<dbReference type="NCBIfam" id="NF005574">
    <property type="entry name" value="PRK07259.1"/>
    <property type="match status" value="1"/>
</dbReference>
<dbReference type="NCBIfam" id="TIGR01037">
    <property type="entry name" value="pyrD_sub1_fam"/>
    <property type="match status" value="1"/>
</dbReference>
<dbReference type="PANTHER" id="PTHR48109:SF1">
    <property type="entry name" value="DIHYDROOROTATE DEHYDROGENASE (FUMARATE)"/>
    <property type="match status" value="1"/>
</dbReference>
<dbReference type="PANTHER" id="PTHR48109">
    <property type="entry name" value="DIHYDROOROTATE DEHYDROGENASE (QUINONE), MITOCHONDRIAL-RELATED"/>
    <property type="match status" value="1"/>
</dbReference>
<dbReference type="Pfam" id="PF01180">
    <property type="entry name" value="DHO_dh"/>
    <property type="match status" value="1"/>
</dbReference>
<dbReference type="PIRSF" id="PIRSF000164">
    <property type="entry name" value="DHO_oxidase"/>
    <property type="match status" value="1"/>
</dbReference>
<dbReference type="SUPFAM" id="SSF51395">
    <property type="entry name" value="FMN-linked oxidoreductases"/>
    <property type="match status" value="1"/>
</dbReference>
<dbReference type="PROSITE" id="PS00911">
    <property type="entry name" value="DHODEHASE_1"/>
    <property type="match status" value="1"/>
</dbReference>
<dbReference type="PROSITE" id="PS00912">
    <property type="entry name" value="DHODEHASE_2"/>
    <property type="match status" value="1"/>
</dbReference>
<comment type="function">
    <text evidence="1">Catalyzes the conversion of dihydroorotate to orotate with NAD(+) as electron acceptor.</text>
</comment>
<comment type="catalytic activity">
    <reaction>
        <text>(S)-dihydroorotate + NAD(+) = orotate + NADH + H(+)</text>
        <dbReference type="Rhea" id="RHEA:13513"/>
        <dbReference type="ChEBI" id="CHEBI:15378"/>
        <dbReference type="ChEBI" id="CHEBI:30839"/>
        <dbReference type="ChEBI" id="CHEBI:30864"/>
        <dbReference type="ChEBI" id="CHEBI:57540"/>
        <dbReference type="ChEBI" id="CHEBI:57945"/>
        <dbReference type="EC" id="1.3.1.14"/>
    </reaction>
</comment>
<comment type="cofactor">
    <cofactor evidence="1">
        <name>FMN</name>
        <dbReference type="ChEBI" id="CHEBI:58210"/>
    </cofactor>
    <text evidence="1">Binds 1 FMN per subunit.</text>
</comment>
<comment type="pathway">
    <text>Pyrimidine metabolism; UMP biosynthesis via de novo pathway; orotate from (S)-dihydroorotate (NAD(+) route): step 1/1.</text>
</comment>
<comment type="subunit">
    <text evidence="1">Heterotetramer of 2 PyrK and 2 PyrD type B subunits.</text>
</comment>
<comment type="subcellular location">
    <subcellularLocation>
        <location evidence="1">Cytoplasm</location>
    </subcellularLocation>
</comment>
<comment type="similarity">
    <text evidence="2">Belongs to the dihydroorotate dehydrogenase family. Type 1 subfamily.</text>
</comment>